<accession>O51316</accession>
<keyword id="KW-0067">ATP-binding</keyword>
<keyword id="KW-0436">Ligase</keyword>
<keyword id="KW-0547">Nucleotide-binding</keyword>
<keyword id="KW-0648">Protein biosynthesis</keyword>
<keyword id="KW-1185">Reference proteome</keyword>
<organism>
    <name type="scientific">Borreliella burgdorferi (strain ATCC 35210 / DSM 4680 / CIP 102532 / B31)</name>
    <name type="common">Borrelia burgdorferi</name>
    <dbReference type="NCBI Taxonomy" id="224326"/>
    <lineage>
        <taxon>Bacteria</taxon>
        <taxon>Pseudomonadati</taxon>
        <taxon>Spirochaetota</taxon>
        <taxon>Spirochaetia</taxon>
        <taxon>Spirochaetales</taxon>
        <taxon>Borreliaceae</taxon>
        <taxon>Borreliella</taxon>
    </lineage>
</organism>
<reference key="1">
    <citation type="journal article" date="1997" name="Nature">
        <title>Genomic sequence of a Lyme disease spirochaete, Borrelia burgdorferi.</title>
        <authorList>
            <person name="Fraser C.M."/>
            <person name="Casjens S."/>
            <person name="Huang W.M."/>
            <person name="Sutton G.G."/>
            <person name="Clayton R.A."/>
            <person name="Lathigra R."/>
            <person name="White O."/>
            <person name="Ketchum K.A."/>
            <person name="Dodson R.J."/>
            <person name="Hickey E.K."/>
            <person name="Gwinn M.L."/>
            <person name="Dougherty B.A."/>
            <person name="Tomb J.-F."/>
            <person name="Fleischmann R.D."/>
            <person name="Richardson D.L."/>
            <person name="Peterson J.D."/>
            <person name="Kerlavage A.R."/>
            <person name="Quackenbush J."/>
            <person name="Salzberg S.L."/>
            <person name="Hanson M."/>
            <person name="van Vugt R."/>
            <person name="Palmer N."/>
            <person name="Adams M.D."/>
            <person name="Gocayne J.D."/>
            <person name="Weidman J.F."/>
            <person name="Utterback T.R."/>
            <person name="Watthey L."/>
            <person name="McDonald L.A."/>
            <person name="Artiach P."/>
            <person name="Bowman C."/>
            <person name="Garland S.A."/>
            <person name="Fujii C."/>
            <person name="Cotton M.D."/>
            <person name="Horst K."/>
            <person name="Roberts K.M."/>
            <person name="Hatch B."/>
            <person name="Smith H.O."/>
            <person name="Venter J.C."/>
        </authorList>
    </citation>
    <scope>NUCLEOTIDE SEQUENCE [LARGE SCALE GENOMIC DNA]</scope>
    <source>
        <strain>ATCC 35210 / DSM 4680 / CIP 102532 / B31</strain>
    </source>
</reference>
<comment type="function">
    <text evidence="1">Allows the formation of correctly charged Asn-tRNA(Asn) or Gln-tRNA(Gln) through the transamidation of misacylated Asp-tRNA(Asn) or Glu-tRNA(Gln) in organisms which lack either or both of asparaginyl-tRNA or glutaminyl-tRNA synthetases. The reaction takes place in the presence of glutamine and ATP through an activated phospho-Asp-tRNA(Asn) or phospho-Glu-tRNA(Gln) (By similarity).</text>
</comment>
<comment type="catalytic activity">
    <reaction>
        <text>L-glutamyl-tRNA(Gln) + L-glutamine + ATP + H2O = L-glutaminyl-tRNA(Gln) + L-glutamate + ADP + phosphate + H(+)</text>
        <dbReference type="Rhea" id="RHEA:17521"/>
        <dbReference type="Rhea" id="RHEA-COMP:9681"/>
        <dbReference type="Rhea" id="RHEA-COMP:9684"/>
        <dbReference type="ChEBI" id="CHEBI:15377"/>
        <dbReference type="ChEBI" id="CHEBI:15378"/>
        <dbReference type="ChEBI" id="CHEBI:29985"/>
        <dbReference type="ChEBI" id="CHEBI:30616"/>
        <dbReference type="ChEBI" id="CHEBI:43474"/>
        <dbReference type="ChEBI" id="CHEBI:58359"/>
        <dbReference type="ChEBI" id="CHEBI:78520"/>
        <dbReference type="ChEBI" id="CHEBI:78521"/>
        <dbReference type="ChEBI" id="CHEBI:456216"/>
    </reaction>
</comment>
<comment type="catalytic activity">
    <reaction>
        <text>L-aspartyl-tRNA(Asn) + L-glutamine + ATP + H2O = L-asparaginyl-tRNA(Asn) + L-glutamate + ADP + phosphate + 2 H(+)</text>
        <dbReference type="Rhea" id="RHEA:14513"/>
        <dbReference type="Rhea" id="RHEA-COMP:9674"/>
        <dbReference type="Rhea" id="RHEA-COMP:9677"/>
        <dbReference type="ChEBI" id="CHEBI:15377"/>
        <dbReference type="ChEBI" id="CHEBI:15378"/>
        <dbReference type="ChEBI" id="CHEBI:29985"/>
        <dbReference type="ChEBI" id="CHEBI:30616"/>
        <dbReference type="ChEBI" id="CHEBI:43474"/>
        <dbReference type="ChEBI" id="CHEBI:58359"/>
        <dbReference type="ChEBI" id="CHEBI:78515"/>
        <dbReference type="ChEBI" id="CHEBI:78516"/>
        <dbReference type="ChEBI" id="CHEBI:456216"/>
    </reaction>
</comment>
<comment type="subunit">
    <text evidence="1">Heterotrimer of A, B and C subunits.</text>
</comment>
<comment type="similarity">
    <text evidence="2">Belongs to the GatB/GatE family. GatB subfamily.</text>
</comment>
<gene>
    <name type="primary">gatB</name>
    <name type="ordered locus">BB_0341</name>
</gene>
<dbReference type="EC" id="6.3.5.-"/>
<dbReference type="EMBL" id="AE000783">
    <property type="protein sequence ID" value="AAC66716.1"/>
    <property type="molecule type" value="Genomic_DNA"/>
</dbReference>
<dbReference type="PIR" id="D70142">
    <property type="entry name" value="D70142"/>
</dbReference>
<dbReference type="RefSeq" id="NP_212475.1">
    <property type="nucleotide sequence ID" value="NC_001318.1"/>
</dbReference>
<dbReference type="RefSeq" id="WP_002657789.1">
    <property type="nucleotide sequence ID" value="NC_001318.1"/>
</dbReference>
<dbReference type="SMR" id="O51316"/>
<dbReference type="STRING" id="224326.BB_0341"/>
<dbReference type="PaxDb" id="224326-BB_0341"/>
<dbReference type="EnsemblBacteria" id="AAC66716">
    <property type="protein sequence ID" value="AAC66716"/>
    <property type="gene ID" value="BB_0341"/>
</dbReference>
<dbReference type="GeneID" id="56567770"/>
<dbReference type="KEGG" id="bbu:BB_0341"/>
<dbReference type="PATRIC" id="fig|224326.49.peg.737"/>
<dbReference type="HOGENOM" id="CLU_019240_0_0_12"/>
<dbReference type="OrthoDB" id="9804078at2"/>
<dbReference type="Proteomes" id="UP000001807">
    <property type="component" value="Chromosome"/>
</dbReference>
<dbReference type="GO" id="GO:0050566">
    <property type="term" value="F:asparaginyl-tRNA synthase (glutamine-hydrolyzing) activity"/>
    <property type="evidence" value="ECO:0007669"/>
    <property type="project" value="RHEA"/>
</dbReference>
<dbReference type="GO" id="GO:0005524">
    <property type="term" value="F:ATP binding"/>
    <property type="evidence" value="ECO:0007669"/>
    <property type="project" value="UniProtKB-KW"/>
</dbReference>
<dbReference type="GO" id="GO:0050567">
    <property type="term" value="F:glutaminyl-tRNA synthase (glutamine-hydrolyzing) activity"/>
    <property type="evidence" value="ECO:0007669"/>
    <property type="project" value="UniProtKB-UniRule"/>
</dbReference>
<dbReference type="GO" id="GO:0070681">
    <property type="term" value="P:glutaminyl-tRNAGln biosynthesis via transamidation"/>
    <property type="evidence" value="ECO:0007669"/>
    <property type="project" value="TreeGrafter"/>
</dbReference>
<dbReference type="GO" id="GO:0006412">
    <property type="term" value="P:translation"/>
    <property type="evidence" value="ECO:0007669"/>
    <property type="project" value="UniProtKB-UniRule"/>
</dbReference>
<dbReference type="FunFam" id="1.10.10.410:FF:000001">
    <property type="entry name" value="Aspartyl/glutamyl-tRNA(Asn/Gln) amidotransferase subunit B"/>
    <property type="match status" value="1"/>
</dbReference>
<dbReference type="Gene3D" id="1.10.10.410">
    <property type="match status" value="1"/>
</dbReference>
<dbReference type="HAMAP" id="MF_00121">
    <property type="entry name" value="GatB"/>
    <property type="match status" value="1"/>
</dbReference>
<dbReference type="InterPro" id="IPR017959">
    <property type="entry name" value="Asn/Gln-tRNA_amidoTrfase_suB/E"/>
</dbReference>
<dbReference type="InterPro" id="IPR006075">
    <property type="entry name" value="Asn/Gln-tRNA_Trfase_suB/E_cat"/>
</dbReference>
<dbReference type="InterPro" id="IPR018027">
    <property type="entry name" value="Asn/Gln_amidotransferase"/>
</dbReference>
<dbReference type="InterPro" id="IPR003789">
    <property type="entry name" value="Asn/Gln_tRNA_amidoTrase-B-like"/>
</dbReference>
<dbReference type="InterPro" id="IPR004413">
    <property type="entry name" value="GatB"/>
</dbReference>
<dbReference type="InterPro" id="IPR023168">
    <property type="entry name" value="GatB_Yqey_C_2"/>
</dbReference>
<dbReference type="InterPro" id="IPR017958">
    <property type="entry name" value="Gln-tRNA_amidoTrfase_suB_CS"/>
</dbReference>
<dbReference type="InterPro" id="IPR014746">
    <property type="entry name" value="Gln_synth/guanido_kin_cat_dom"/>
</dbReference>
<dbReference type="NCBIfam" id="TIGR00133">
    <property type="entry name" value="gatB"/>
    <property type="match status" value="1"/>
</dbReference>
<dbReference type="NCBIfam" id="NF004012">
    <property type="entry name" value="PRK05477.1-2"/>
    <property type="match status" value="1"/>
</dbReference>
<dbReference type="NCBIfam" id="NF004014">
    <property type="entry name" value="PRK05477.1-4"/>
    <property type="match status" value="1"/>
</dbReference>
<dbReference type="PANTHER" id="PTHR11659">
    <property type="entry name" value="GLUTAMYL-TRNA GLN AMIDOTRANSFERASE SUBUNIT B MITOCHONDRIAL AND PROKARYOTIC PET112-RELATED"/>
    <property type="match status" value="1"/>
</dbReference>
<dbReference type="PANTHER" id="PTHR11659:SF0">
    <property type="entry name" value="GLUTAMYL-TRNA(GLN) AMIDOTRANSFERASE SUBUNIT B, MITOCHONDRIAL"/>
    <property type="match status" value="1"/>
</dbReference>
<dbReference type="Pfam" id="PF02934">
    <property type="entry name" value="GatB_N"/>
    <property type="match status" value="1"/>
</dbReference>
<dbReference type="Pfam" id="PF02637">
    <property type="entry name" value="GatB_Yqey"/>
    <property type="match status" value="1"/>
</dbReference>
<dbReference type="SMART" id="SM00845">
    <property type="entry name" value="GatB_Yqey"/>
    <property type="match status" value="1"/>
</dbReference>
<dbReference type="SUPFAM" id="SSF89095">
    <property type="entry name" value="GatB/YqeY motif"/>
    <property type="match status" value="1"/>
</dbReference>
<dbReference type="SUPFAM" id="SSF55931">
    <property type="entry name" value="Glutamine synthetase/guanido kinase"/>
    <property type="match status" value="1"/>
</dbReference>
<dbReference type="PROSITE" id="PS01234">
    <property type="entry name" value="GATB"/>
    <property type="match status" value="1"/>
</dbReference>
<feature type="chain" id="PRO_0000148766" description="Aspartyl/glutamyl-tRNA(Asn/Gln) amidotransferase subunit B">
    <location>
        <begin position="1"/>
        <end position="485"/>
    </location>
</feature>
<sequence length="485" mass="54521">MEYKLVIGLEIHVQLGLKTKAFCGCKNEFGGVPNSRVCPICLGLPGSLPSVNVELINSAILAGHATNSKIRNVVKFDRKHYYYPDLPKGYQISQNDKPICEGGSLLIETPSGPKKINIIRIHMEEDSGKSLHLLDSENQSYVDFNRSGAPLLEIVSAPDINSGDEAVAFLSSLREIFRYLDLSECNMENGSFRCDVNVNLIVKENGVEHKTPIAEIKNLNSFKSIKAAIEYEELRQQQEWIQFKKTLNSCGKHTRGFDDRSGVTVIQRNKETVSDYRYFQEPDLPLIEIDDSYIDNIKNLKLIELPFHARIRLKGQYGLSDFDVITLTADKHLLKYFEEAVINSSDPKKVANWILSEVLSVLNDKGISVLEFNLLPSYITELVEFIVAGKISGKMAKRVFSEMMTRGVSASVVISENQLEQVSDKFVIKQIVLEVLDENPKSIELYKKGKDHAIKFMMGQIMKKSSGKINPILANEILLESLSNV</sequence>
<protein>
    <recommendedName>
        <fullName>Aspartyl/glutamyl-tRNA(Asn/Gln) amidotransferase subunit B</fullName>
        <shortName>Asp/Glu-ADT subunit B</shortName>
        <ecNumber>6.3.5.-</ecNumber>
    </recommendedName>
</protein>
<evidence type="ECO:0000250" key="1"/>
<evidence type="ECO:0000305" key="2"/>
<proteinExistence type="inferred from homology"/>
<name>GATB_BORBU</name>